<keyword id="KW-0479">Metal-binding</keyword>
<keyword id="KW-1185">Reference proteome</keyword>
<protein>
    <recommendedName>
        <fullName>Uncharacterized protein MJ1656</fullName>
    </recommendedName>
</protein>
<reference key="1">
    <citation type="journal article" date="1996" name="Science">
        <title>Complete genome sequence of the methanogenic archaeon, Methanococcus jannaschii.</title>
        <authorList>
            <person name="Bult C.J."/>
            <person name="White O."/>
            <person name="Olsen G.J."/>
            <person name="Zhou L."/>
            <person name="Fleischmann R.D."/>
            <person name="Sutton G.G."/>
            <person name="Blake J.A."/>
            <person name="FitzGerald L.M."/>
            <person name="Clayton R.A."/>
            <person name="Gocayne J.D."/>
            <person name="Kerlavage A.R."/>
            <person name="Dougherty B.A."/>
            <person name="Tomb J.-F."/>
            <person name="Adams M.D."/>
            <person name="Reich C.I."/>
            <person name="Overbeek R."/>
            <person name="Kirkness E.F."/>
            <person name="Weinstock K.G."/>
            <person name="Merrick J.M."/>
            <person name="Glodek A."/>
            <person name="Scott J.L."/>
            <person name="Geoghagen N.S.M."/>
            <person name="Weidman J.F."/>
            <person name="Fuhrmann J.L."/>
            <person name="Nguyen D."/>
            <person name="Utterback T.R."/>
            <person name="Kelley J.M."/>
            <person name="Peterson J.D."/>
            <person name="Sadow P.W."/>
            <person name="Hanna M.C."/>
            <person name="Cotton M.D."/>
            <person name="Roberts K.M."/>
            <person name="Hurst M.A."/>
            <person name="Kaine B.P."/>
            <person name="Borodovsky M."/>
            <person name="Klenk H.-P."/>
            <person name="Fraser C.M."/>
            <person name="Smith H.O."/>
            <person name="Woese C.R."/>
            <person name="Venter J.C."/>
        </authorList>
    </citation>
    <scope>NUCLEOTIDE SEQUENCE [LARGE SCALE GENOMIC DNA]</scope>
    <source>
        <strain>ATCC 43067 / DSM 2661 / JAL-1 / JCM 10045 / NBRC 100440</strain>
    </source>
</reference>
<dbReference type="EMBL" id="L77117">
    <property type="protein sequence ID" value="AAB99677.1"/>
    <property type="molecule type" value="Genomic_DNA"/>
</dbReference>
<dbReference type="PIR" id="F64506">
    <property type="entry name" value="F64506"/>
</dbReference>
<dbReference type="RefSeq" id="WP_010871180.1">
    <property type="nucleotide sequence ID" value="NC_000909.1"/>
</dbReference>
<dbReference type="SMR" id="Q59050"/>
<dbReference type="FunCoup" id="Q59050">
    <property type="interactions" value="83"/>
</dbReference>
<dbReference type="STRING" id="243232.MJ_1656"/>
<dbReference type="PaxDb" id="243232-MJ_1656"/>
<dbReference type="EnsemblBacteria" id="AAB99677">
    <property type="protein sequence ID" value="AAB99677"/>
    <property type="gene ID" value="MJ_1656"/>
</dbReference>
<dbReference type="GeneID" id="1452565"/>
<dbReference type="KEGG" id="mja:MJ_1656"/>
<dbReference type="eggNOG" id="arCOG00235">
    <property type="taxonomic scope" value="Archaea"/>
</dbReference>
<dbReference type="HOGENOM" id="CLU_028458_4_2_2"/>
<dbReference type="InParanoid" id="Q59050"/>
<dbReference type="PhylomeDB" id="Q59050"/>
<dbReference type="Proteomes" id="UP000000805">
    <property type="component" value="Chromosome"/>
</dbReference>
<dbReference type="GO" id="GO:0003824">
    <property type="term" value="F:catalytic activity"/>
    <property type="evidence" value="ECO:0007669"/>
    <property type="project" value="InterPro"/>
</dbReference>
<dbReference type="GO" id="GO:0046872">
    <property type="term" value="F:metal ion binding"/>
    <property type="evidence" value="ECO:0007669"/>
    <property type="project" value="UniProtKB-KW"/>
</dbReference>
<dbReference type="GO" id="GO:0044281">
    <property type="term" value="P:small molecule metabolic process"/>
    <property type="evidence" value="ECO:0007669"/>
    <property type="project" value="UniProtKB-ARBA"/>
</dbReference>
<dbReference type="FunFam" id="3.90.850.10:FF:000002">
    <property type="entry name" value="2-hydroxyhepta-2,4-diene-1,7-dioate isomerase"/>
    <property type="match status" value="1"/>
</dbReference>
<dbReference type="Gene3D" id="3.90.850.10">
    <property type="entry name" value="Fumarylacetoacetase-like, C-terminal domain"/>
    <property type="match status" value="1"/>
</dbReference>
<dbReference type="InterPro" id="IPR051121">
    <property type="entry name" value="FAH"/>
</dbReference>
<dbReference type="InterPro" id="IPR011234">
    <property type="entry name" value="Fumarylacetoacetase-like_C"/>
</dbReference>
<dbReference type="InterPro" id="IPR036663">
    <property type="entry name" value="Fumarylacetoacetase_C_sf"/>
</dbReference>
<dbReference type="PANTHER" id="PTHR42796:SF4">
    <property type="entry name" value="FUMARYLACETOACETATE HYDROLASE DOMAIN-CONTAINING PROTEIN 2A"/>
    <property type="match status" value="1"/>
</dbReference>
<dbReference type="PANTHER" id="PTHR42796">
    <property type="entry name" value="FUMARYLACETOACETATE HYDROLASE DOMAIN-CONTAINING PROTEIN 2A-RELATED"/>
    <property type="match status" value="1"/>
</dbReference>
<dbReference type="Pfam" id="PF01557">
    <property type="entry name" value="FAA_hydrolase"/>
    <property type="match status" value="1"/>
</dbReference>
<dbReference type="SUPFAM" id="SSF56529">
    <property type="entry name" value="FAH"/>
    <property type="match status" value="1"/>
</dbReference>
<evidence type="ECO:0000250" key="1"/>
<evidence type="ECO:0000305" key="2"/>
<name>Y1656_METJA</name>
<accession>Q59050</accession>
<proteinExistence type="inferred from homology"/>
<feature type="chain" id="PRO_0000156838" description="Uncharacterized protein MJ1656">
    <location>
        <begin position="1"/>
        <end position="237"/>
    </location>
</feature>
<feature type="binding site" evidence="1">
    <location>
        <position position="91"/>
    </location>
    <ligand>
        <name>a divalent metal cation</name>
        <dbReference type="ChEBI" id="CHEBI:60240"/>
    </ligand>
</feature>
<feature type="binding site" evidence="1">
    <location>
        <position position="93"/>
    </location>
    <ligand>
        <name>a divalent metal cation</name>
        <dbReference type="ChEBI" id="CHEBI:60240"/>
    </ligand>
</feature>
<feature type="binding site" evidence="1">
    <location>
        <position position="122"/>
    </location>
    <ligand>
        <name>a divalent metal cation</name>
        <dbReference type="ChEBI" id="CHEBI:60240"/>
    </ligand>
</feature>
<gene>
    <name type="ordered locus">MJ1656</name>
</gene>
<comment type="similarity">
    <text evidence="2">Belongs to the FAH family.</text>
</comment>
<organism>
    <name type="scientific">Methanocaldococcus jannaschii (strain ATCC 43067 / DSM 2661 / JAL-1 / JCM 10045 / NBRC 100440)</name>
    <name type="common">Methanococcus jannaschii</name>
    <dbReference type="NCBI Taxonomy" id="243232"/>
    <lineage>
        <taxon>Archaea</taxon>
        <taxon>Methanobacteriati</taxon>
        <taxon>Methanobacteriota</taxon>
        <taxon>Methanomada group</taxon>
        <taxon>Methanococci</taxon>
        <taxon>Methanococcales</taxon>
        <taxon>Methanocaldococcaceae</taxon>
        <taxon>Methanocaldococcus</taxon>
    </lineage>
</organism>
<sequence>MIISFEKLGEKYKIIDLNLNSIKQKIGDSLNIKEIKPTKIICVGLNYIDHAKELNMEIPEYPIIFLKPTSAIIYNEDYIIRPRISKRVDYEVELAIVIGKKCKNIKKDEANDYIMGYTILNDVTARDLQQKDGQWTRAKSFDTFCPIGPRIVKDIDPMNLNIECRVNGEIKQKSNTKNMIFDVYELVEFVASIMTLYPGDIISTGTPPGVGELKAGDVVECEIEGIGILRNYVKDEE</sequence>